<name>SEC16_CANGA</name>
<sequence length="2238" mass="247422">MTPEAKRKKNQKKKLRQKQKKAAEKATDLPATDQSVNISGAEDALTSNSNVSTPDYTSNFEISVTSTQEVNVDSQLSQNQNSDNFINEQKENDPQSETVFDSHEDIESEMKDNYHNDIKNTTEAITFDTAQNIIGGSIDSSNTVKSEDKINESSSKISDPDCQEDILKLELEGQPLESSCNDDKESVVEGNNENDNNDDLVNDHPTAEDGSDFFDNLASNNTEVELSSTQNSNLLTENRLESEEFGKPEKLDYPKELSYSEEVDLVEEVDHVEEVDHVEEVDHSEEEDLVEEVDHVEEVDHSEEVDHSEEVDHVEEVDHSEELLTSSVSTQTGMAENTIRHVDESNLGQQKMEERNINSDTHKDATARVSDFHANDEFETGPAAQINSLIEMNDDEQSVNDLQDESSLLQEETTFSQIPKNEVNTENQENIGSESVSKINVANENSMESAIEDLFPSMHNTNEQNPWELPQQGENVVENEVSHEENQRITETTKDDSDNIDRILCDREDKKEDSFDDLFGNNEVGDDVPWLQESMKSEEGEKHHQSSTAKEESPANVRTSDNTASQDNDTLPSESVKSNQQQNVESSSDRQQTSADTVKKFSFLEEDDDLLDDDDSFLESEEEIEELESNETVQINELTQEMSTSAESKKLNHNPYRPSSHSSINTQMDPKYNNYQTVPNSSTAPTGIVRPQQITTFLPTNNAQTNTPGTILSPIQTTNEKVKKLTEEKKKSDAYDFPINLVSSTVKKGHAKPVGVFTNQFSRNGSTPTTPKINPHSRNSSVNPAQIIPKNPYASIQQPNPVIAPTTNMINNPINMMPTARMRGNSAVSTTSGKSVGTSVATKQNPYSPQITKSPRASISQPAGIPNNSKYGPISPSTSQFNSLGQVLDSGLVHSSTTPMGSTLSPISTKLNANNQPSPQSKQYPGNSSYLPSQNDSRSKYAPAFSTGQYAGYSSHSKPAVNQPALPFPRKQSESAGDANPPINTVLPPGIRKTNVLLESQQNLRQNANYPTYAEHSHEQTNSYNVHGASNKKIVNNNALLVKQFPIFNWGSNNKVIYGIPLGQNDSVMMPTNSPLQNLRMIGAEILIKPTQLIKSFPGPLCGSKVKKSDVEQWLLTASKDADVDEEAALLLSLLKLKLSTTSTFKDMATLLYDTATLHEYLAQPLTSLNQAPNAFSLDPESQFRVLSFLQVGAHDDALRFSLEKKDYSISLLIGSLLGKDKWCEVVQRYLSEQFTAIANNSNLWAHLLPLIFQVFVGSSKTAVSRFYKNQEEANWAAENWRGIVAAVLINITDHSQPKQTASIQTPPAVVTEFLIEFGIFLKKLGMNLPASILFVIANVPLSNVPILPDSDVHFRSIGSTNNVLGAILSETYEYTISQDLKFKGYPATLPLKLFHAYCLQEEGLTSLAYKYVDYLSSATKSMTKKDAESLNLSHHLSILTNRLAGSSSSWLGKPKLSSVWGQIDKSFNKYIGGDDDLPKPATEKKVFDSYTPSSSTNSSMIDLSHSVSNFMPAQINQLSRNNLNSENKMSTVPDLTAFGEKNAFEPPTNTWTGMSLQGSPQRAVSNMKPPLSNRPNLRRIKTELPSGEDELLSMTVKQGKKSYAPDNLNRASNSSNETLKSSQSANNSVPYHQSTPNLIGMQSVEQKKSYYPSNQRAMRKSAMPTQPENLEISRNARSYEPHTKTKKVYKPNQTLEEEPPIQSYNDDVVSQNQFEEAPNLQNDQEKILQPTASPEGLSQTRISNYSPERPPLPVYSEDSKNMDPKNISDLVKEQQITDKSLEHELEQLPTENDADYKISNANEDNAINEEEREIGNGEVELNVDQSQSHLSASIPQTQNDRESTTVSISPGLGLEMDVDKEDSNAPAPKLFSEKPNPSPYAPPTVGKKGTKKTSYMPKGKTESFIAEPEISSYESSPLDMYAYSGYRPQEKEKSTSSIVEESSQISNEDAPDKSSIAARQAVELKQDEVSKKPITTKLSTPKSLPIPPSPFANPLANNNTTGVLPTENFEPVIKVSRNTTARAFTPVPPASDQYDDVVEEDSDDSDDSEDDSPMQSNNSNNGNSERNENKQNDNYSDDEMPTKKKSHDNNDAGSGWFGWLKKDTNEKKAVKAKLGNQNSFYYDEQLKRWVNKNASEEDKQQLATPAPPPPIVKRKDTEPKTKPRSISGVTPHLDTGIGSSIPPISGNAPPKPKSGPSLAAKTNGLDDLLNLTAAAPATSTRRKKKGGRGYVNVMENL</sequence>
<proteinExistence type="inferred from homology"/>
<dbReference type="EMBL" id="CR380954">
    <property type="protein sequence ID" value="CAG59971.1"/>
    <property type="molecule type" value="Genomic_DNA"/>
</dbReference>
<dbReference type="RefSeq" id="XP_447038.1">
    <property type="nucleotide sequence ID" value="XM_447038.1"/>
</dbReference>
<dbReference type="SMR" id="Q6FRV6"/>
<dbReference type="FunCoup" id="Q6FRV6">
    <property type="interactions" value="120"/>
</dbReference>
<dbReference type="STRING" id="284593.Q6FRV6"/>
<dbReference type="EnsemblFungi" id="CAGL0H05577g-T">
    <property type="protein sequence ID" value="CAGL0H05577g-T-p1"/>
    <property type="gene ID" value="CAGL0H05577g"/>
</dbReference>
<dbReference type="KEGG" id="cgr:2888609"/>
<dbReference type="CGD" id="CAL0131878">
    <property type="gene designation" value="CAGL0H05577g"/>
</dbReference>
<dbReference type="VEuPathDB" id="FungiDB:CAGL0H05577g"/>
<dbReference type="eggNOG" id="KOG1913">
    <property type="taxonomic scope" value="Eukaryota"/>
</dbReference>
<dbReference type="HOGENOM" id="CLU_000768_0_0_1"/>
<dbReference type="InParanoid" id="Q6FRV6"/>
<dbReference type="OMA" id="NQPPPIM"/>
<dbReference type="Proteomes" id="UP000002428">
    <property type="component" value="Chromosome H"/>
</dbReference>
<dbReference type="GO" id="GO:0070971">
    <property type="term" value="C:endoplasmic reticulum exit site"/>
    <property type="evidence" value="ECO:0007669"/>
    <property type="project" value="TreeGrafter"/>
</dbReference>
<dbReference type="GO" id="GO:0005789">
    <property type="term" value="C:endoplasmic reticulum membrane"/>
    <property type="evidence" value="ECO:0007669"/>
    <property type="project" value="UniProtKB-SubCell"/>
</dbReference>
<dbReference type="GO" id="GO:0012507">
    <property type="term" value="C:ER to Golgi transport vesicle membrane"/>
    <property type="evidence" value="ECO:0007669"/>
    <property type="project" value="TreeGrafter"/>
</dbReference>
<dbReference type="GO" id="GO:0062040">
    <property type="term" value="C:fungal biofilm matrix"/>
    <property type="evidence" value="ECO:0000314"/>
    <property type="project" value="CGD"/>
</dbReference>
<dbReference type="GO" id="GO:0006914">
    <property type="term" value="P:autophagy"/>
    <property type="evidence" value="ECO:0007669"/>
    <property type="project" value="UniProtKB-KW"/>
</dbReference>
<dbReference type="GO" id="GO:0007030">
    <property type="term" value="P:Golgi organization"/>
    <property type="evidence" value="ECO:0007669"/>
    <property type="project" value="TreeGrafter"/>
</dbReference>
<dbReference type="GO" id="GO:0070973">
    <property type="term" value="P:protein localization to endoplasmic reticulum exit site"/>
    <property type="evidence" value="ECO:0007669"/>
    <property type="project" value="TreeGrafter"/>
</dbReference>
<dbReference type="GO" id="GO:0015031">
    <property type="term" value="P:protein transport"/>
    <property type="evidence" value="ECO:0007669"/>
    <property type="project" value="UniProtKB-KW"/>
</dbReference>
<dbReference type="GO" id="GO:0016192">
    <property type="term" value="P:vesicle-mediated transport"/>
    <property type="evidence" value="ECO:0007669"/>
    <property type="project" value="UniProtKB-KW"/>
</dbReference>
<dbReference type="CDD" id="cd09233">
    <property type="entry name" value="ACE1-Sec16-like"/>
    <property type="match status" value="1"/>
</dbReference>
<dbReference type="Gene3D" id="1.20.58.940">
    <property type="match status" value="1"/>
</dbReference>
<dbReference type="Gene3D" id="6.20.50.30">
    <property type="match status" value="1"/>
</dbReference>
<dbReference type="InterPro" id="IPR024298">
    <property type="entry name" value="Sec16_Sec23-bd"/>
</dbReference>
<dbReference type="PANTHER" id="PTHR13402">
    <property type="entry name" value="RGPR-RELATED"/>
    <property type="match status" value="1"/>
</dbReference>
<dbReference type="PANTHER" id="PTHR13402:SF6">
    <property type="entry name" value="SECRETORY 16, ISOFORM I"/>
    <property type="match status" value="1"/>
</dbReference>
<dbReference type="Pfam" id="PF12931">
    <property type="entry name" value="TPR_Sec16"/>
    <property type="match status" value="1"/>
</dbReference>
<organism>
    <name type="scientific">Candida glabrata (strain ATCC 2001 / BCRC 20586 / JCM 3761 / NBRC 0622 / NRRL Y-65 / CBS 138)</name>
    <name type="common">Yeast</name>
    <name type="synonym">Nakaseomyces glabratus</name>
    <dbReference type="NCBI Taxonomy" id="284593"/>
    <lineage>
        <taxon>Eukaryota</taxon>
        <taxon>Fungi</taxon>
        <taxon>Dikarya</taxon>
        <taxon>Ascomycota</taxon>
        <taxon>Saccharomycotina</taxon>
        <taxon>Saccharomycetes</taxon>
        <taxon>Saccharomycetales</taxon>
        <taxon>Saccharomycetaceae</taxon>
        <taxon>Nakaseomyces</taxon>
    </lineage>
</organism>
<feature type="chain" id="PRO_0000295533" description="COPII coat assembly protein SEC16">
    <location>
        <begin position="1"/>
        <end position="2238"/>
    </location>
</feature>
<feature type="region of interest" description="Disordered" evidence="2">
    <location>
        <begin position="1"/>
        <end position="115"/>
    </location>
</feature>
<feature type="region of interest" description="Disordered" evidence="2">
    <location>
        <begin position="135"/>
        <end position="161"/>
    </location>
</feature>
<feature type="region of interest" description="Disordered" evidence="2">
    <location>
        <begin position="173"/>
        <end position="255"/>
    </location>
</feature>
<feature type="region of interest" description="Disordered" evidence="2">
    <location>
        <begin position="297"/>
        <end position="363"/>
    </location>
</feature>
<feature type="region of interest" description="Disordered" evidence="2">
    <location>
        <begin position="394"/>
        <end position="596"/>
    </location>
</feature>
<feature type="region of interest" description="Disordered" evidence="2">
    <location>
        <begin position="642"/>
        <end position="666"/>
    </location>
</feature>
<feature type="region of interest" description="Disordered" evidence="2">
    <location>
        <begin position="757"/>
        <end position="787"/>
    </location>
</feature>
<feature type="region of interest" description="Disordered" evidence="2">
    <location>
        <begin position="824"/>
        <end position="878"/>
    </location>
</feature>
<feature type="region of interest" description="Disordered" evidence="2">
    <location>
        <begin position="892"/>
        <end position="988"/>
    </location>
</feature>
<feature type="region of interest" description="Disordered" evidence="2">
    <location>
        <begin position="1547"/>
        <end position="1577"/>
    </location>
</feature>
<feature type="region of interest" description="Disordered" evidence="2">
    <location>
        <begin position="1600"/>
        <end position="1703"/>
    </location>
</feature>
<feature type="region of interest" description="Disordered" evidence="2">
    <location>
        <begin position="1732"/>
        <end position="1766"/>
    </location>
</feature>
<feature type="region of interest" description="Disordered" evidence="2">
    <location>
        <begin position="1809"/>
        <end position="1901"/>
    </location>
</feature>
<feature type="region of interest" description="Disordered" evidence="2">
    <location>
        <begin position="1928"/>
        <end position="2102"/>
    </location>
</feature>
<feature type="region of interest" description="Disordered" evidence="2">
    <location>
        <begin position="2133"/>
        <end position="2238"/>
    </location>
</feature>
<feature type="compositionally biased region" description="Basic residues" evidence="2">
    <location>
        <begin position="1"/>
        <end position="20"/>
    </location>
</feature>
<feature type="compositionally biased region" description="Polar residues" evidence="2">
    <location>
        <begin position="45"/>
        <end position="87"/>
    </location>
</feature>
<feature type="compositionally biased region" description="Basic and acidic residues" evidence="2">
    <location>
        <begin position="100"/>
        <end position="115"/>
    </location>
</feature>
<feature type="compositionally biased region" description="Polar residues" evidence="2">
    <location>
        <begin position="135"/>
        <end position="144"/>
    </location>
</feature>
<feature type="compositionally biased region" description="Polar residues" evidence="2">
    <location>
        <begin position="217"/>
        <end position="236"/>
    </location>
</feature>
<feature type="compositionally biased region" description="Basic and acidic residues" evidence="2">
    <location>
        <begin position="238"/>
        <end position="255"/>
    </location>
</feature>
<feature type="compositionally biased region" description="Basic and acidic residues" evidence="2">
    <location>
        <begin position="297"/>
        <end position="322"/>
    </location>
</feature>
<feature type="compositionally biased region" description="Polar residues" evidence="2">
    <location>
        <begin position="325"/>
        <end position="335"/>
    </location>
</feature>
<feature type="compositionally biased region" description="Basic and acidic residues" evidence="2">
    <location>
        <begin position="351"/>
        <end position="363"/>
    </location>
</feature>
<feature type="compositionally biased region" description="Acidic residues" evidence="2">
    <location>
        <begin position="394"/>
        <end position="404"/>
    </location>
</feature>
<feature type="compositionally biased region" description="Polar residues" evidence="2">
    <location>
        <begin position="405"/>
        <end position="448"/>
    </location>
</feature>
<feature type="compositionally biased region" description="Basic and acidic residues" evidence="2">
    <location>
        <begin position="480"/>
        <end position="513"/>
    </location>
</feature>
<feature type="compositionally biased region" description="Basic and acidic residues" evidence="2">
    <location>
        <begin position="535"/>
        <end position="553"/>
    </location>
</feature>
<feature type="compositionally biased region" description="Polar residues" evidence="2">
    <location>
        <begin position="556"/>
        <end position="596"/>
    </location>
</feature>
<feature type="compositionally biased region" description="Polar residues" evidence="2">
    <location>
        <begin position="657"/>
        <end position="666"/>
    </location>
</feature>
<feature type="compositionally biased region" description="Polar residues" evidence="2">
    <location>
        <begin position="757"/>
        <end position="784"/>
    </location>
</feature>
<feature type="compositionally biased region" description="Low complexity" evidence="2">
    <location>
        <begin position="824"/>
        <end position="842"/>
    </location>
</feature>
<feature type="compositionally biased region" description="Polar residues" evidence="2">
    <location>
        <begin position="843"/>
        <end position="878"/>
    </location>
</feature>
<feature type="compositionally biased region" description="Polar residues" evidence="2">
    <location>
        <begin position="893"/>
        <end position="936"/>
    </location>
</feature>
<feature type="compositionally biased region" description="Polar residues" evidence="2">
    <location>
        <begin position="946"/>
        <end position="957"/>
    </location>
</feature>
<feature type="compositionally biased region" description="Polar residues" evidence="2">
    <location>
        <begin position="1548"/>
        <end position="1565"/>
    </location>
</feature>
<feature type="compositionally biased region" description="Polar residues" evidence="2">
    <location>
        <begin position="1610"/>
        <end position="1638"/>
    </location>
</feature>
<feature type="compositionally biased region" description="Polar residues" evidence="2">
    <location>
        <begin position="1732"/>
        <end position="1747"/>
    </location>
</feature>
<feature type="compositionally biased region" description="Polar residues" evidence="2">
    <location>
        <begin position="1824"/>
        <end position="1849"/>
    </location>
</feature>
<feature type="compositionally biased region" description="Polar residues" evidence="2">
    <location>
        <begin position="1936"/>
        <end position="1948"/>
    </location>
</feature>
<feature type="compositionally biased region" description="Basic and acidic residues" evidence="2">
    <location>
        <begin position="1963"/>
        <end position="1972"/>
    </location>
</feature>
<feature type="compositionally biased region" description="Acidic residues" evidence="2">
    <location>
        <begin position="2034"/>
        <end position="2053"/>
    </location>
</feature>
<comment type="function">
    <text evidence="1">Involved in the initiation of assembly of the COPII coat required for the formation of transport vesicles from the endoplasmic reticulum (ER) and the selection of cargo molecules. Also involved in autophagy (By similarity).</text>
</comment>
<comment type="subcellular location">
    <subcellularLocation>
        <location evidence="1">Endoplasmic reticulum membrane</location>
        <topology evidence="1">Peripheral membrane protein</topology>
        <orientation evidence="1">Cytoplasmic side</orientation>
    </subcellularLocation>
</comment>
<comment type="similarity">
    <text evidence="3">Belongs to the SEC16 family.</text>
</comment>
<accession>Q6FRV6</accession>
<gene>
    <name type="primary">SEC16</name>
    <name type="ordered locus">CAGL0H05577g</name>
</gene>
<evidence type="ECO:0000250" key="1"/>
<evidence type="ECO:0000256" key="2">
    <source>
        <dbReference type="SAM" id="MobiDB-lite"/>
    </source>
</evidence>
<evidence type="ECO:0000305" key="3"/>
<reference key="1">
    <citation type="journal article" date="2004" name="Nature">
        <title>Genome evolution in yeasts.</title>
        <authorList>
            <person name="Dujon B."/>
            <person name="Sherman D."/>
            <person name="Fischer G."/>
            <person name="Durrens P."/>
            <person name="Casaregola S."/>
            <person name="Lafontaine I."/>
            <person name="de Montigny J."/>
            <person name="Marck C."/>
            <person name="Neuveglise C."/>
            <person name="Talla E."/>
            <person name="Goffard N."/>
            <person name="Frangeul L."/>
            <person name="Aigle M."/>
            <person name="Anthouard V."/>
            <person name="Babour A."/>
            <person name="Barbe V."/>
            <person name="Barnay S."/>
            <person name="Blanchin S."/>
            <person name="Beckerich J.-M."/>
            <person name="Beyne E."/>
            <person name="Bleykasten C."/>
            <person name="Boisrame A."/>
            <person name="Boyer J."/>
            <person name="Cattolico L."/>
            <person name="Confanioleri F."/>
            <person name="de Daruvar A."/>
            <person name="Despons L."/>
            <person name="Fabre E."/>
            <person name="Fairhead C."/>
            <person name="Ferry-Dumazet H."/>
            <person name="Groppi A."/>
            <person name="Hantraye F."/>
            <person name="Hennequin C."/>
            <person name="Jauniaux N."/>
            <person name="Joyet P."/>
            <person name="Kachouri R."/>
            <person name="Kerrest A."/>
            <person name="Koszul R."/>
            <person name="Lemaire M."/>
            <person name="Lesur I."/>
            <person name="Ma L."/>
            <person name="Muller H."/>
            <person name="Nicaud J.-M."/>
            <person name="Nikolski M."/>
            <person name="Oztas S."/>
            <person name="Ozier-Kalogeropoulos O."/>
            <person name="Pellenz S."/>
            <person name="Potier S."/>
            <person name="Richard G.-F."/>
            <person name="Straub M.-L."/>
            <person name="Suleau A."/>
            <person name="Swennen D."/>
            <person name="Tekaia F."/>
            <person name="Wesolowski-Louvel M."/>
            <person name="Westhof E."/>
            <person name="Wirth B."/>
            <person name="Zeniou-Meyer M."/>
            <person name="Zivanovic Y."/>
            <person name="Bolotin-Fukuhara M."/>
            <person name="Thierry A."/>
            <person name="Bouchier C."/>
            <person name="Caudron B."/>
            <person name="Scarpelli C."/>
            <person name="Gaillardin C."/>
            <person name="Weissenbach J."/>
            <person name="Wincker P."/>
            <person name="Souciet J.-L."/>
        </authorList>
    </citation>
    <scope>NUCLEOTIDE SEQUENCE [LARGE SCALE GENOMIC DNA]</scope>
    <source>
        <strain>ATCC 2001 / BCRC 20586 / JCM 3761 / NBRC 0622 / NRRL Y-65 / CBS 138</strain>
    </source>
</reference>
<keyword id="KW-0072">Autophagy</keyword>
<keyword id="KW-0256">Endoplasmic reticulum</keyword>
<keyword id="KW-0931">ER-Golgi transport</keyword>
<keyword id="KW-0472">Membrane</keyword>
<keyword id="KW-0653">Protein transport</keyword>
<keyword id="KW-1185">Reference proteome</keyword>
<keyword id="KW-0813">Transport</keyword>
<protein>
    <recommendedName>
        <fullName>COPII coat assembly protein SEC16</fullName>
    </recommendedName>
    <alternativeName>
        <fullName>Protein transport protein SEC16</fullName>
    </alternativeName>
</protein>